<accession>Q2PFV7</accession>
<keyword id="KW-0007">Acetylation</keyword>
<keyword id="KW-0009">Actin-binding</keyword>
<keyword id="KW-0106">Calcium</keyword>
<keyword id="KW-0965">Cell junction</keyword>
<keyword id="KW-1003">Cell membrane</keyword>
<keyword id="KW-0966">Cell projection</keyword>
<keyword id="KW-0963">Cytoplasm</keyword>
<keyword id="KW-0206">Cytoskeleton</keyword>
<keyword id="KW-0472">Membrane</keyword>
<keyword id="KW-0479">Metal-binding</keyword>
<keyword id="KW-0597">Phosphoprotein</keyword>
<keyword id="KW-1185">Reference proteome</keyword>
<keyword id="KW-0677">Repeat</keyword>
<dbReference type="EMBL" id="AB220480">
    <property type="protein sequence ID" value="BAE73013.1"/>
    <property type="molecule type" value="mRNA"/>
</dbReference>
<dbReference type="RefSeq" id="NP_001306279.1">
    <property type="nucleotide sequence ID" value="NM_001319350.1"/>
</dbReference>
<dbReference type="RefSeq" id="XP_045252542.1">
    <property type="nucleotide sequence ID" value="XM_045396607.2"/>
</dbReference>
<dbReference type="SMR" id="Q2PFV7"/>
<dbReference type="STRING" id="9541.ENSMFAP00000034127"/>
<dbReference type="GeneID" id="102127552"/>
<dbReference type="VEuPathDB" id="HostDB:ENSMFAG00000003078"/>
<dbReference type="eggNOG" id="KOG0035">
    <property type="taxonomic scope" value="Eukaryota"/>
</dbReference>
<dbReference type="OMA" id="QQRWITV"/>
<dbReference type="Proteomes" id="UP000233100">
    <property type="component" value="Chromosome 7"/>
</dbReference>
<dbReference type="GO" id="GO:0005923">
    <property type="term" value="C:bicellular tight junction"/>
    <property type="evidence" value="ECO:0000250"/>
    <property type="project" value="AgBase"/>
</dbReference>
<dbReference type="GO" id="GO:0031252">
    <property type="term" value="C:cell leading edge"/>
    <property type="evidence" value="ECO:0000250"/>
    <property type="project" value="AgBase"/>
</dbReference>
<dbReference type="GO" id="GO:0097433">
    <property type="term" value="C:dense body"/>
    <property type="evidence" value="ECO:0000250"/>
    <property type="project" value="AgBase"/>
</dbReference>
<dbReference type="GO" id="GO:0005925">
    <property type="term" value="C:focal adhesion"/>
    <property type="evidence" value="ECO:0000250"/>
    <property type="project" value="AgBase"/>
</dbReference>
<dbReference type="GO" id="GO:0090637">
    <property type="term" value="C:inner dense plaque of desmosome"/>
    <property type="evidence" value="ECO:0000250"/>
    <property type="project" value="AgBase"/>
</dbReference>
<dbReference type="GO" id="GO:0030027">
    <property type="term" value="C:lamellipodium"/>
    <property type="evidence" value="ECO:0000250"/>
    <property type="project" value="AgBase"/>
</dbReference>
<dbReference type="GO" id="GO:0016328">
    <property type="term" value="C:lateral plasma membrane"/>
    <property type="evidence" value="ECO:0000250"/>
    <property type="project" value="AgBase"/>
</dbReference>
<dbReference type="GO" id="GO:0090636">
    <property type="term" value="C:outer dense plaque of desmosome"/>
    <property type="evidence" value="ECO:0000250"/>
    <property type="project" value="AgBase"/>
</dbReference>
<dbReference type="GO" id="GO:0001726">
    <property type="term" value="C:ruffle"/>
    <property type="evidence" value="ECO:0007669"/>
    <property type="project" value="UniProtKB-SubCell"/>
</dbReference>
<dbReference type="GO" id="GO:0042383">
    <property type="term" value="C:sarcolemma"/>
    <property type="evidence" value="ECO:0000250"/>
    <property type="project" value="AgBase"/>
</dbReference>
<dbReference type="GO" id="GO:0030486">
    <property type="term" value="C:smooth muscle dense body"/>
    <property type="evidence" value="ECO:0000250"/>
    <property type="project" value="AgBase"/>
</dbReference>
<dbReference type="GO" id="GO:0001725">
    <property type="term" value="C:stress fiber"/>
    <property type="evidence" value="ECO:0000250"/>
    <property type="project" value="AgBase"/>
</dbReference>
<dbReference type="GO" id="GO:1990357">
    <property type="term" value="C:terminal web"/>
    <property type="evidence" value="ECO:0000250"/>
    <property type="project" value="AgBase"/>
</dbReference>
<dbReference type="GO" id="GO:0030018">
    <property type="term" value="C:Z disc"/>
    <property type="evidence" value="ECO:0007669"/>
    <property type="project" value="UniProtKB-SubCell"/>
</dbReference>
<dbReference type="GO" id="GO:0005915">
    <property type="term" value="C:zonula adherens"/>
    <property type="evidence" value="ECO:0000250"/>
    <property type="project" value="AgBase"/>
</dbReference>
<dbReference type="GO" id="GO:0003779">
    <property type="term" value="F:actin binding"/>
    <property type="evidence" value="ECO:0007669"/>
    <property type="project" value="UniProtKB-KW"/>
</dbReference>
<dbReference type="GO" id="GO:0051393">
    <property type="term" value="F:alpha-actinin binding"/>
    <property type="evidence" value="ECO:0000250"/>
    <property type="project" value="AgBase"/>
</dbReference>
<dbReference type="GO" id="GO:0005509">
    <property type="term" value="F:calcium ion binding"/>
    <property type="evidence" value="ECO:0007669"/>
    <property type="project" value="InterPro"/>
</dbReference>
<dbReference type="GO" id="GO:0042803">
    <property type="term" value="F:protein homodimerization activity"/>
    <property type="evidence" value="ECO:0000250"/>
    <property type="project" value="AgBase"/>
</dbReference>
<dbReference type="GO" id="GO:0017166">
    <property type="term" value="F:vinculin binding"/>
    <property type="evidence" value="ECO:0000250"/>
    <property type="project" value="AgBase"/>
</dbReference>
<dbReference type="GO" id="GO:0045214">
    <property type="term" value="P:sarcomere organization"/>
    <property type="evidence" value="ECO:0000250"/>
    <property type="project" value="AgBase"/>
</dbReference>
<dbReference type="GO" id="GO:0048741">
    <property type="term" value="P:skeletal muscle fiber development"/>
    <property type="evidence" value="ECO:0000250"/>
    <property type="project" value="AgBase"/>
</dbReference>
<dbReference type="CDD" id="cd21214">
    <property type="entry name" value="CH_ACTN_rpt1"/>
    <property type="match status" value="1"/>
</dbReference>
<dbReference type="CDD" id="cd21216">
    <property type="entry name" value="CH_ACTN_rpt2"/>
    <property type="match status" value="1"/>
</dbReference>
<dbReference type="CDD" id="cd00051">
    <property type="entry name" value="EFh"/>
    <property type="match status" value="1"/>
</dbReference>
<dbReference type="CDD" id="cd00176">
    <property type="entry name" value="SPEC"/>
    <property type="match status" value="2"/>
</dbReference>
<dbReference type="FunFam" id="1.10.238.10:FF:000004">
    <property type="entry name" value="Actinin alpha 1"/>
    <property type="match status" value="1"/>
</dbReference>
<dbReference type="FunFam" id="1.10.418.10:FF:000001">
    <property type="entry name" value="Actinin alpha 1"/>
    <property type="match status" value="1"/>
</dbReference>
<dbReference type="FunFam" id="1.20.58.60:FF:000004">
    <property type="entry name" value="Actinin alpha 1"/>
    <property type="match status" value="1"/>
</dbReference>
<dbReference type="FunFam" id="1.20.58.60:FF:000005">
    <property type="entry name" value="Actinin alpha 1"/>
    <property type="match status" value="1"/>
</dbReference>
<dbReference type="FunFam" id="1.10.418.10:FF:000005">
    <property type="entry name" value="Actinin alpha 4"/>
    <property type="match status" value="1"/>
</dbReference>
<dbReference type="FunFam" id="1.10.238.10:FF:000018">
    <property type="entry name" value="Actinin, alpha 1"/>
    <property type="match status" value="1"/>
</dbReference>
<dbReference type="FunFam" id="1.20.58.60:FF:000002">
    <property type="entry name" value="Actinin, alpha 1"/>
    <property type="match status" value="1"/>
</dbReference>
<dbReference type="FunFam" id="1.20.58.60:FF:000003">
    <property type="entry name" value="Actinin, alpha 1"/>
    <property type="match status" value="1"/>
</dbReference>
<dbReference type="Gene3D" id="1.20.58.60">
    <property type="match status" value="4"/>
</dbReference>
<dbReference type="Gene3D" id="1.10.418.10">
    <property type="entry name" value="Calponin-like domain"/>
    <property type="match status" value="2"/>
</dbReference>
<dbReference type="Gene3D" id="1.10.238.10">
    <property type="entry name" value="EF-hand"/>
    <property type="match status" value="2"/>
</dbReference>
<dbReference type="InterPro" id="IPR001589">
    <property type="entry name" value="Actinin_actin-bd_CS"/>
</dbReference>
<dbReference type="InterPro" id="IPR001715">
    <property type="entry name" value="CH_dom"/>
</dbReference>
<dbReference type="InterPro" id="IPR036872">
    <property type="entry name" value="CH_dom_sf"/>
</dbReference>
<dbReference type="InterPro" id="IPR011992">
    <property type="entry name" value="EF-hand-dom_pair"/>
</dbReference>
<dbReference type="InterPro" id="IPR014837">
    <property type="entry name" value="EF-hand_Ca_insen"/>
</dbReference>
<dbReference type="InterPro" id="IPR018247">
    <property type="entry name" value="EF_Hand_1_Ca_BS"/>
</dbReference>
<dbReference type="InterPro" id="IPR002048">
    <property type="entry name" value="EF_hand_dom"/>
</dbReference>
<dbReference type="InterPro" id="IPR018159">
    <property type="entry name" value="Spectrin/alpha-actinin"/>
</dbReference>
<dbReference type="InterPro" id="IPR002017">
    <property type="entry name" value="Spectrin_repeat"/>
</dbReference>
<dbReference type="PANTHER" id="PTHR11915">
    <property type="entry name" value="SPECTRIN/FILAMIN RELATED CYTOSKELETAL PROTEIN"/>
    <property type="match status" value="1"/>
</dbReference>
<dbReference type="Pfam" id="PF00307">
    <property type="entry name" value="CH"/>
    <property type="match status" value="2"/>
</dbReference>
<dbReference type="Pfam" id="PF13405">
    <property type="entry name" value="EF-hand_6"/>
    <property type="match status" value="1"/>
</dbReference>
<dbReference type="Pfam" id="PF08726">
    <property type="entry name" value="EFhand_Ca_insen"/>
    <property type="match status" value="1"/>
</dbReference>
<dbReference type="Pfam" id="PF00435">
    <property type="entry name" value="Spectrin"/>
    <property type="match status" value="4"/>
</dbReference>
<dbReference type="SMART" id="SM00033">
    <property type="entry name" value="CH"/>
    <property type="match status" value="2"/>
</dbReference>
<dbReference type="SMART" id="SM00054">
    <property type="entry name" value="EFh"/>
    <property type="match status" value="2"/>
</dbReference>
<dbReference type="SMART" id="SM01184">
    <property type="entry name" value="efhand_Ca_insen"/>
    <property type="match status" value="1"/>
</dbReference>
<dbReference type="SMART" id="SM00150">
    <property type="entry name" value="SPEC"/>
    <property type="match status" value="3"/>
</dbReference>
<dbReference type="SUPFAM" id="SSF47576">
    <property type="entry name" value="Calponin-homology domain, CH-domain"/>
    <property type="match status" value="1"/>
</dbReference>
<dbReference type="SUPFAM" id="SSF47473">
    <property type="entry name" value="EF-hand"/>
    <property type="match status" value="1"/>
</dbReference>
<dbReference type="SUPFAM" id="SSF46966">
    <property type="entry name" value="Spectrin repeat"/>
    <property type="match status" value="4"/>
</dbReference>
<dbReference type="PROSITE" id="PS00019">
    <property type="entry name" value="ACTININ_1"/>
    <property type="match status" value="1"/>
</dbReference>
<dbReference type="PROSITE" id="PS00020">
    <property type="entry name" value="ACTININ_2"/>
    <property type="match status" value="1"/>
</dbReference>
<dbReference type="PROSITE" id="PS50021">
    <property type="entry name" value="CH"/>
    <property type="match status" value="2"/>
</dbReference>
<dbReference type="PROSITE" id="PS00018">
    <property type="entry name" value="EF_HAND_1"/>
    <property type="match status" value="1"/>
</dbReference>
<dbReference type="PROSITE" id="PS50222">
    <property type="entry name" value="EF_HAND_2"/>
    <property type="match status" value="2"/>
</dbReference>
<gene>
    <name type="primary">ACTN1</name>
    <name type="ORF">QmoA-13496</name>
</gene>
<feature type="chain" id="PRO_0000312774" description="Alpha-actinin-1">
    <location>
        <begin position="1"/>
        <end position="892"/>
    </location>
</feature>
<feature type="domain" description="Calponin-homology (CH) 1" evidence="5">
    <location>
        <begin position="31"/>
        <end position="135"/>
    </location>
</feature>
<feature type="domain" description="Calponin-homology (CH) 2" evidence="5">
    <location>
        <begin position="144"/>
        <end position="250"/>
    </location>
</feature>
<feature type="repeat" description="Spectrin 1">
    <location>
        <begin position="274"/>
        <end position="384"/>
    </location>
</feature>
<feature type="repeat" description="Spectrin 2">
    <location>
        <begin position="394"/>
        <end position="499"/>
    </location>
</feature>
<feature type="repeat" description="Spectrin 3">
    <location>
        <begin position="509"/>
        <end position="620"/>
    </location>
</feature>
<feature type="repeat" description="Spectrin 4">
    <location>
        <begin position="630"/>
        <end position="733"/>
    </location>
</feature>
<feature type="domain" description="EF-hand 1" evidence="6">
    <location>
        <begin position="746"/>
        <end position="781"/>
    </location>
</feature>
<feature type="domain" description="EF-hand 2" evidence="6">
    <location>
        <begin position="787"/>
        <end position="822"/>
    </location>
</feature>
<feature type="region of interest" description="Actin-binding">
    <location>
        <begin position="1"/>
        <end position="247"/>
    </location>
</feature>
<feature type="region of interest" description="Interaction with DDN" evidence="1">
    <location>
        <begin position="274"/>
        <end position="733"/>
    </location>
</feature>
<feature type="binding site" evidence="6">
    <location>
        <position position="759"/>
    </location>
    <ligand>
        <name>Ca(2+)</name>
        <dbReference type="ChEBI" id="CHEBI:29108"/>
    </ligand>
</feature>
<feature type="binding site" evidence="6">
    <location>
        <position position="761"/>
    </location>
    <ligand>
        <name>Ca(2+)</name>
        <dbReference type="ChEBI" id="CHEBI:29108"/>
    </ligand>
</feature>
<feature type="binding site" evidence="6">
    <location>
        <position position="763"/>
    </location>
    <ligand>
        <name>Ca(2+)</name>
        <dbReference type="ChEBI" id="CHEBI:29108"/>
    </ligand>
</feature>
<feature type="binding site" evidence="6">
    <location>
        <position position="765"/>
    </location>
    <ligand>
        <name>Ca(2+)</name>
        <dbReference type="ChEBI" id="CHEBI:29108"/>
    </ligand>
</feature>
<feature type="binding site" evidence="6">
    <location>
        <position position="770"/>
    </location>
    <ligand>
        <name>Ca(2+)</name>
        <dbReference type="ChEBI" id="CHEBI:29108"/>
    </ligand>
</feature>
<feature type="modified residue" description="N-acetylmethionine" evidence="2">
    <location>
        <position position="1"/>
    </location>
</feature>
<feature type="modified residue" description="Phosphoserine" evidence="2">
    <location>
        <position position="6"/>
    </location>
</feature>
<feature type="modified residue" description="Phosphotyrosine; by FAK1" evidence="2">
    <location>
        <position position="12"/>
    </location>
</feature>
<feature type="modified residue" description="N6-acetyllysine" evidence="2">
    <location>
        <position position="95"/>
    </location>
</feature>
<feature type="modified residue" description="N6-acetyllysine" evidence="2">
    <location>
        <position position="195"/>
    </location>
</feature>
<feature type="modified residue" description="Phosphoserine" evidence="2">
    <location>
        <position position="471"/>
    </location>
</feature>
<feature type="modified residue" description="N6-acetyllysine" evidence="2">
    <location>
        <position position="676"/>
    </location>
</feature>
<feature type="modified residue" description="Phosphoserine" evidence="2">
    <location>
        <position position="677"/>
    </location>
</feature>
<feature type="modified residue" description="Phosphoserine" evidence="4">
    <location>
        <position position="890"/>
    </location>
</feature>
<sequence length="892" mass="103025">MDHYDSQQTNDYMQPEEDWDRDLLLDPAWEKQQRKTFTAWCNSHLRKAGTQIENIEEDFRDGLKLMLLLEVISGERLAKPERGKMRVHKISNVNKALDFIASKGVKLVSIGAEEIVDGNVKMTLGMIWTIILRFAIQDISVEETSAKEGLLLWCQRKTAPYKNVNIQNFHISWKDGLGFCALIHRHRPELIDYGKLRKDDPLTNLNTAFDVAEKYLDIPKMLDAEDIVGTARPDEKAIMTYVSSFYHAFSGAQKAETAANRICKVLAVNQENEQLMEDYEKLASDLLEWIRRTIPWLENRVPENTMHAMQQKLEDFRDYRRLHKPPKVQEKCQLEINFNTLQTKLRLSNRPAFMPSEGRMVSDINNAWGCLEQVEKGYEEWLLNEIRRLERLDHLAEKFRQKASIHEAWTDGKEAMLRQKDYETATLSEIKALLKKHEAFESDLAAHQDRVEQIAAIAQELNELDYYDSPSVNARCQKICDQWDNLGALTQKRREALERTEKLLETIDQLYLEYAKRAAPFNNWMEGAMEDLQDTFIVHTIEEIQGLTTAHEQFKATLPDADKERLAILGIHNEVSKIVQTYHVNMAGTNPYTTITPQEINGKWDHVRQLVPRRDQALTEEHARQQHNERLRKQFGAQANVIGPWIQTKMEEIGRISIEMHGTLEDQLSHLRQYEKSIVNYKPKIDQLEGDHQLIQEALIFDNKHTNYTMEHIRVGWEQLLTTIARTINEVENQILTRDAKGISQEQMNEFRASFNHFDRDHSGTLGPEEFKACLISLGYDIGNDPQGEAEFARIMSIVDPNRLGVVTFQAFIDFMSRETADTDTADQVMASFKILAGDKNYITVDELRRELPPDQAEYCIARMAPYTGPDSVPGALDYMSFSTALYGESDL</sequence>
<proteinExistence type="evidence at transcript level"/>
<comment type="function">
    <text evidence="2">F-actin cross-linking protein which is thought to anchor actin to a variety of intracellular structures. Association with IGSF8 regulates the immune synapse formation and is required for efficient T-cell activation.</text>
</comment>
<comment type="subunit">
    <text evidence="2 3 4">Homodimer; antiparallel. Interacts with MYOZ2, TTID and LPP. Interacts with DDN (By similarity). Interacts with PSD. Interacts with MICALL2 (By similarity). Interacts with DNM2 and CTTN. Interacts with PDLIM1. Interacts with PDLIM2. Interacts with PDLIM4 (via PDZ domain) (By similarity). Interacts with IGSF8 (By similarity).</text>
</comment>
<comment type="subcellular location">
    <subcellularLocation>
        <location evidence="2">Cytoplasm</location>
        <location evidence="2">Cytoskeleton</location>
    </subcellularLocation>
    <subcellularLocation>
        <location evidence="2">Cytoplasm</location>
        <location evidence="2">Myofibril</location>
        <location evidence="2">Sarcomere</location>
        <location evidence="2">Z line</location>
    </subcellularLocation>
    <subcellularLocation>
        <location evidence="2">Cell membrane</location>
    </subcellularLocation>
    <subcellularLocation>
        <location evidence="4">Cell junction</location>
    </subcellularLocation>
    <subcellularLocation>
        <location evidence="3">Cell projection</location>
        <location evidence="3">Ruffle</location>
    </subcellularLocation>
    <text evidence="3">Colocalizes with MYOZ2 and PPP3CA at the Z-line of heart and skeletal muscle. Colocalizes with PSD in membrane ruffles and central reticular structures.</text>
</comment>
<comment type="similarity">
    <text evidence="7">Belongs to the alpha-actinin family.</text>
</comment>
<name>ACTN1_MACFA</name>
<evidence type="ECO:0000250" key="1"/>
<evidence type="ECO:0000250" key="2">
    <source>
        <dbReference type="UniProtKB" id="P12814"/>
    </source>
</evidence>
<evidence type="ECO:0000250" key="3">
    <source>
        <dbReference type="UniProtKB" id="Q7TPR4"/>
    </source>
</evidence>
<evidence type="ECO:0000250" key="4">
    <source>
        <dbReference type="UniProtKB" id="Q9Z1P2"/>
    </source>
</evidence>
<evidence type="ECO:0000255" key="5">
    <source>
        <dbReference type="PROSITE-ProRule" id="PRU00044"/>
    </source>
</evidence>
<evidence type="ECO:0000255" key="6">
    <source>
        <dbReference type="PROSITE-ProRule" id="PRU00448"/>
    </source>
</evidence>
<evidence type="ECO:0000305" key="7"/>
<organism>
    <name type="scientific">Macaca fascicularis</name>
    <name type="common">Crab-eating macaque</name>
    <name type="synonym">Cynomolgus monkey</name>
    <dbReference type="NCBI Taxonomy" id="9541"/>
    <lineage>
        <taxon>Eukaryota</taxon>
        <taxon>Metazoa</taxon>
        <taxon>Chordata</taxon>
        <taxon>Craniata</taxon>
        <taxon>Vertebrata</taxon>
        <taxon>Euteleostomi</taxon>
        <taxon>Mammalia</taxon>
        <taxon>Eutheria</taxon>
        <taxon>Euarchontoglires</taxon>
        <taxon>Primates</taxon>
        <taxon>Haplorrhini</taxon>
        <taxon>Catarrhini</taxon>
        <taxon>Cercopithecidae</taxon>
        <taxon>Cercopithecinae</taxon>
        <taxon>Macaca</taxon>
    </lineage>
</organism>
<protein>
    <recommendedName>
        <fullName>Alpha-actinin-1</fullName>
    </recommendedName>
    <alternativeName>
        <fullName>Alpha-actinin cytoskeletal isoform</fullName>
    </alternativeName>
    <alternativeName>
        <fullName>F-actin cross-linking protein</fullName>
    </alternativeName>
    <alternativeName>
        <fullName>Non-muscle alpha-actinin-1</fullName>
    </alternativeName>
</protein>
<reference key="1">
    <citation type="submission" date="2005-07" db="EMBL/GenBank/DDBJ databases">
        <title>Analysis of gene expression in cynomolgus monkey tissues by macaque cDNA oligo-chips.</title>
        <authorList>
            <person name="Kobayashi M."/>
            <person name="Tanuma R."/>
            <person name="Hirata M."/>
            <person name="Osada N."/>
            <person name="Kusuda J."/>
            <person name="Sugano S."/>
            <person name="Hashimoto K."/>
        </authorList>
    </citation>
    <scope>NUCLEOTIDE SEQUENCE [LARGE SCALE MRNA]</scope>
    <source>
        <tissue>Medulla oblongata</tissue>
    </source>
</reference>